<name>RBL_DIGPU</name>
<dbReference type="EC" id="4.1.1.39" evidence="1"/>
<dbReference type="EMBL" id="X83720">
    <property type="protein sequence ID" value="CAA58693.1"/>
    <property type="molecule type" value="Genomic_DNA"/>
</dbReference>
<dbReference type="EMBL" id="L01902">
    <property type="protein sequence ID" value="AAA84204.3"/>
    <property type="molecule type" value="Genomic_DNA"/>
</dbReference>
<dbReference type="PIR" id="S71470">
    <property type="entry name" value="S71470"/>
</dbReference>
<dbReference type="SMR" id="P28399"/>
<dbReference type="GO" id="GO:0009507">
    <property type="term" value="C:chloroplast"/>
    <property type="evidence" value="ECO:0007669"/>
    <property type="project" value="UniProtKB-SubCell"/>
</dbReference>
<dbReference type="GO" id="GO:0000287">
    <property type="term" value="F:magnesium ion binding"/>
    <property type="evidence" value="ECO:0007669"/>
    <property type="project" value="UniProtKB-UniRule"/>
</dbReference>
<dbReference type="GO" id="GO:0004497">
    <property type="term" value="F:monooxygenase activity"/>
    <property type="evidence" value="ECO:0007669"/>
    <property type="project" value="UniProtKB-KW"/>
</dbReference>
<dbReference type="GO" id="GO:0016984">
    <property type="term" value="F:ribulose-bisphosphate carboxylase activity"/>
    <property type="evidence" value="ECO:0007669"/>
    <property type="project" value="UniProtKB-UniRule"/>
</dbReference>
<dbReference type="GO" id="GO:0009853">
    <property type="term" value="P:photorespiration"/>
    <property type="evidence" value="ECO:0007669"/>
    <property type="project" value="UniProtKB-KW"/>
</dbReference>
<dbReference type="GO" id="GO:0019253">
    <property type="term" value="P:reductive pentose-phosphate cycle"/>
    <property type="evidence" value="ECO:0007669"/>
    <property type="project" value="UniProtKB-UniRule"/>
</dbReference>
<dbReference type="CDD" id="cd08212">
    <property type="entry name" value="RuBisCO_large_I"/>
    <property type="match status" value="1"/>
</dbReference>
<dbReference type="FunFam" id="3.20.20.110:FF:000001">
    <property type="entry name" value="Ribulose bisphosphate carboxylase large chain"/>
    <property type="match status" value="1"/>
</dbReference>
<dbReference type="FunFam" id="3.30.70.150:FF:000001">
    <property type="entry name" value="Ribulose bisphosphate carboxylase large chain"/>
    <property type="match status" value="1"/>
</dbReference>
<dbReference type="Gene3D" id="3.20.20.110">
    <property type="entry name" value="Ribulose bisphosphate carboxylase, large subunit, C-terminal domain"/>
    <property type="match status" value="1"/>
</dbReference>
<dbReference type="Gene3D" id="3.30.70.150">
    <property type="entry name" value="RuBisCO large subunit, N-terminal domain"/>
    <property type="match status" value="1"/>
</dbReference>
<dbReference type="HAMAP" id="MF_01338">
    <property type="entry name" value="RuBisCO_L_type1"/>
    <property type="match status" value="1"/>
</dbReference>
<dbReference type="InterPro" id="IPR033966">
    <property type="entry name" value="RuBisCO"/>
</dbReference>
<dbReference type="InterPro" id="IPR020878">
    <property type="entry name" value="RuBisCo_large_chain_AS"/>
</dbReference>
<dbReference type="InterPro" id="IPR000685">
    <property type="entry name" value="RuBisCO_lsu_C"/>
</dbReference>
<dbReference type="InterPro" id="IPR036376">
    <property type="entry name" value="RuBisCO_lsu_C_sf"/>
</dbReference>
<dbReference type="InterPro" id="IPR017443">
    <property type="entry name" value="RuBisCO_lsu_fd_N"/>
</dbReference>
<dbReference type="InterPro" id="IPR036422">
    <property type="entry name" value="RuBisCO_lsu_N_sf"/>
</dbReference>
<dbReference type="InterPro" id="IPR020888">
    <property type="entry name" value="RuBisCO_lsuI"/>
</dbReference>
<dbReference type="NCBIfam" id="NF003252">
    <property type="entry name" value="PRK04208.1"/>
    <property type="match status" value="1"/>
</dbReference>
<dbReference type="PANTHER" id="PTHR42704">
    <property type="entry name" value="RIBULOSE BISPHOSPHATE CARBOXYLASE"/>
    <property type="match status" value="1"/>
</dbReference>
<dbReference type="PANTHER" id="PTHR42704:SF16">
    <property type="entry name" value="RIBULOSE BISPHOSPHATE CARBOXYLASE LARGE CHAIN"/>
    <property type="match status" value="1"/>
</dbReference>
<dbReference type="Pfam" id="PF00016">
    <property type="entry name" value="RuBisCO_large"/>
    <property type="match status" value="1"/>
</dbReference>
<dbReference type="Pfam" id="PF02788">
    <property type="entry name" value="RuBisCO_large_N"/>
    <property type="match status" value="1"/>
</dbReference>
<dbReference type="SFLD" id="SFLDG01052">
    <property type="entry name" value="RuBisCO"/>
    <property type="match status" value="1"/>
</dbReference>
<dbReference type="SFLD" id="SFLDS00014">
    <property type="entry name" value="RuBisCO"/>
    <property type="match status" value="1"/>
</dbReference>
<dbReference type="SFLD" id="SFLDG00301">
    <property type="entry name" value="RuBisCO-like_proteins"/>
    <property type="match status" value="1"/>
</dbReference>
<dbReference type="SUPFAM" id="SSF51649">
    <property type="entry name" value="RuBisCo, C-terminal domain"/>
    <property type="match status" value="1"/>
</dbReference>
<dbReference type="SUPFAM" id="SSF54966">
    <property type="entry name" value="RuBisCO, large subunit, small (N-terminal) domain"/>
    <property type="match status" value="1"/>
</dbReference>
<dbReference type="PROSITE" id="PS00157">
    <property type="entry name" value="RUBISCO_LARGE"/>
    <property type="match status" value="1"/>
</dbReference>
<proteinExistence type="inferred from homology"/>
<comment type="function">
    <text evidence="1">RuBisCO catalyzes two reactions: the carboxylation of D-ribulose 1,5-bisphosphate, the primary event in carbon dioxide fixation, as well as the oxidative fragmentation of the pentose substrate in the photorespiration process. Both reactions occur simultaneously and in competition at the same active site.</text>
</comment>
<comment type="catalytic activity">
    <reaction evidence="1">
        <text>2 (2R)-3-phosphoglycerate + 2 H(+) = D-ribulose 1,5-bisphosphate + CO2 + H2O</text>
        <dbReference type="Rhea" id="RHEA:23124"/>
        <dbReference type="ChEBI" id="CHEBI:15377"/>
        <dbReference type="ChEBI" id="CHEBI:15378"/>
        <dbReference type="ChEBI" id="CHEBI:16526"/>
        <dbReference type="ChEBI" id="CHEBI:57870"/>
        <dbReference type="ChEBI" id="CHEBI:58272"/>
        <dbReference type="EC" id="4.1.1.39"/>
    </reaction>
</comment>
<comment type="catalytic activity">
    <reaction evidence="1">
        <text>D-ribulose 1,5-bisphosphate + O2 = 2-phosphoglycolate + (2R)-3-phosphoglycerate + 2 H(+)</text>
        <dbReference type="Rhea" id="RHEA:36631"/>
        <dbReference type="ChEBI" id="CHEBI:15378"/>
        <dbReference type="ChEBI" id="CHEBI:15379"/>
        <dbReference type="ChEBI" id="CHEBI:57870"/>
        <dbReference type="ChEBI" id="CHEBI:58033"/>
        <dbReference type="ChEBI" id="CHEBI:58272"/>
    </reaction>
</comment>
<comment type="cofactor">
    <cofactor evidence="1">
        <name>Mg(2+)</name>
        <dbReference type="ChEBI" id="CHEBI:18420"/>
    </cofactor>
    <text evidence="1">Binds 1 Mg(2+) ion per subunit.</text>
</comment>
<comment type="subunit">
    <text evidence="1">Heterohexadecamer of 8 large chains and 8 small chains; disulfide-linked. The disulfide link is formed within the large subunit homodimers.</text>
</comment>
<comment type="subcellular location">
    <subcellularLocation>
        <location>Plastid</location>
        <location>Chloroplast</location>
    </subcellularLocation>
</comment>
<comment type="PTM">
    <text evidence="1">The disulfide bond which can form in the large chain dimeric partners within the hexadecamer appears to be associated with oxidative stress and protein turnover.</text>
</comment>
<comment type="miscellaneous">
    <text evidence="1">The basic functional RuBisCO is composed of a large chain homodimer in a 'head-to-tail' conformation. In form I RuBisCO this homodimer is arranged in a barrel-like tetramer with the small subunits forming a tetrameric 'cap' on each end of the 'barrel'.</text>
</comment>
<comment type="similarity">
    <text evidence="1">Belongs to the RuBisCO large chain family. Type I subfamily.</text>
</comment>
<gene>
    <name evidence="1" type="primary">rbcL</name>
</gene>
<organism>
    <name type="scientific">Digitalis purpurea</name>
    <name type="common">Common foxglove</name>
    <dbReference type="NCBI Taxonomy" id="4164"/>
    <lineage>
        <taxon>Eukaryota</taxon>
        <taxon>Viridiplantae</taxon>
        <taxon>Streptophyta</taxon>
        <taxon>Embryophyta</taxon>
        <taxon>Tracheophyta</taxon>
        <taxon>Spermatophyta</taxon>
        <taxon>Magnoliopsida</taxon>
        <taxon>eudicotyledons</taxon>
        <taxon>Gunneridae</taxon>
        <taxon>Pentapetalae</taxon>
        <taxon>asterids</taxon>
        <taxon>lamiids</taxon>
        <taxon>Lamiales</taxon>
        <taxon>Plantaginaceae</taxon>
        <taxon>Digitalideae</taxon>
        <taxon>Digitalis</taxon>
    </lineage>
</organism>
<accession>P28399</accession>
<accession>Q37317</accession>
<evidence type="ECO:0000255" key="1">
    <source>
        <dbReference type="HAMAP-Rule" id="MF_01338"/>
    </source>
</evidence>
<evidence type="ECO:0000305" key="2"/>
<reference key="1">
    <citation type="journal article" date="1995" name="Plant Mol. Biol.">
        <title>Divergent evolution of two plastid genes, rbcL and atpB, in a non-photosynthetic parasitic plant.</title>
        <authorList>
            <person name="Delavault P.M."/>
            <person name="Sakanyan V."/>
            <person name="Thalouarn P."/>
        </authorList>
    </citation>
    <scope>NUCLEOTIDE SEQUENCE [GENOMIC DNA]</scope>
</reference>
<reference key="2">
    <citation type="journal article" date="1992" name="Science">
        <title>Carnivorous plants: phylogeny and structural evolution.</title>
        <authorList>
            <person name="Albert V.A."/>
            <person name="Williams S.E."/>
            <person name="Chase M.W."/>
        </authorList>
    </citation>
    <scope>NUCLEOTIDE SEQUENCE [GENOMIC DNA] OF 10-476</scope>
</reference>
<keyword id="KW-0007">Acetylation</keyword>
<keyword id="KW-0113">Calvin cycle</keyword>
<keyword id="KW-0120">Carbon dioxide fixation</keyword>
<keyword id="KW-0150">Chloroplast</keyword>
<keyword id="KW-1015">Disulfide bond</keyword>
<keyword id="KW-0456">Lyase</keyword>
<keyword id="KW-0460">Magnesium</keyword>
<keyword id="KW-0479">Metal-binding</keyword>
<keyword id="KW-0488">Methylation</keyword>
<keyword id="KW-0503">Monooxygenase</keyword>
<keyword id="KW-0560">Oxidoreductase</keyword>
<keyword id="KW-0601">Photorespiration</keyword>
<keyword id="KW-0602">Photosynthesis</keyword>
<keyword id="KW-0934">Plastid</keyword>
<protein>
    <recommendedName>
        <fullName evidence="1">Ribulose bisphosphate carboxylase large chain</fullName>
        <shortName evidence="1">RuBisCO large subunit</shortName>
        <ecNumber evidence="1">4.1.1.39</ecNumber>
    </recommendedName>
</protein>
<feature type="propeptide" id="PRO_0000031203" evidence="1">
    <location>
        <begin position="1"/>
        <end position="2"/>
    </location>
</feature>
<feature type="chain" id="PRO_0000031204" description="Ribulose bisphosphate carboxylase large chain">
    <location>
        <begin position="3"/>
        <end position="477"/>
    </location>
</feature>
<feature type="active site" description="Proton acceptor" evidence="1">
    <location>
        <position position="175"/>
    </location>
</feature>
<feature type="active site" description="Proton acceptor" evidence="1">
    <location>
        <position position="294"/>
    </location>
</feature>
<feature type="binding site" description="in homodimeric partner" evidence="1">
    <location>
        <position position="123"/>
    </location>
    <ligand>
        <name>substrate</name>
    </ligand>
</feature>
<feature type="binding site" evidence="1">
    <location>
        <position position="173"/>
    </location>
    <ligand>
        <name>substrate</name>
    </ligand>
</feature>
<feature type="binding site" evidence="1">
    <location>
        <position position="177"/>
    </location>
    <ligand>
        <name>substrate</name>
    </ligand>
</feature>
<feature type="binding site" description="via carbamate group" evidence="1">
    <location>
        <position position="201"/>
    </location>
    <ligand>
        <name>Mg(2+)</name>
        <dbReference type="ChEBI" id="CHEBI:18420"/>
    </ligand>
</feature>
<feature type="binding site" evidence="1">
    <location>
        <position position="203"/>
    </location>
    <ligand>
        <name>Mg(2+)</name>
        <dbReference type="ChEBI" id="CHEBI:18420"/>
    </ligand>
</feature>
<feature type="binding site" evidence="1">
    <location>
        <position position="204"/>
    </location>
    <ligand>
        <name>Mg(2+)</name>
        <dbReference type="ChEBI" id="CHEBI:18420"/>
    </ligand>
</feature>
<feature type="binding site" evidence="1">
    <location>
        <position position="295"/>
    </location>
    <ligand>
        <name>substrate</name>
    </ligand>
</feature>
<feature type="binding site" evidence="1">
    <location>
        <position position="327"/>
    </location>
    <ligand>
        <name>substrate</name>
    </ligand>
</feature>
<feature type="binding site" evidence="1">
    <location>
        <position position="379"/>
    </location>
    <ligand>
        <name>substrate</name>
    </ligand>
</feature>
<feature type="site" description="Transition state stabilizer" evidence="1">
    <location>
        <position position="334"/>
    </location>
</feature>
<feature type="modified residue" description="N-acetylproline" evidence="1">
    <location>
        <position position="3"/>
    </location>
</feature>
<feature type="modified residue" description="N6,N6,N6-trimethyllysine" evidence="1">
    <location>
        <position position="14"/>
    </location>
</feature>
<feature type="modified residue" description="N6-carboxylysine" evidence="1">
    <location>
        <position position="201"/>
    </location>
</feature>
<feature type="disulfide bond" description="Interchain; in linked form" evidence="1">
    <location>
        <position position="247"/>
    </location>
</feature>
<feature type="sequence conflict" description="In Ref. 2; AAA84204." evidence="2" ref="2">
    <original>Q</original>
    <variation>A</variation>
    <location>
        <position position="439"/>
    </location>
</feature>
<feature type="sequence conflict" description="In Ref. 2; AAA84204." evidence="2" ref="2">
    <original>E</original>
    <variation>T</variation>
    <location>
        <position position="443"/>
    </location>
</feature>
<feature type="sequence conflict" description="In Ref. 2." evidence="2" ref="2">
    <original>VFNFAA</original>
    <variation>KFEFKP</variation>
    <location>
        <begin position="466"/>
        <end position="471"/>
    </location>
</feature>
<feature type="sequence conflict" description="In Ref. 2." evidence="2" ref="2">
    <original>V</original>
    <variation>T</variation>
    <location>
        <position position="474"/>
    </location>
</feature>
<geneLocation type="chloroplast"/>
<sequence>MSPQTETKASVGFKAGVKEYKLTYYTPEYETKDTDILAAFRVTPQPGVPPEEAGAAVAAESSTGTWTTVWTDGLTSLDRYKGRCYHIEPVPGEADQYICYVAYPLDLFEEGSVTNMFTSIVGNVFGFKALRALRLEDLRIPVAYVKTFQGPPHGIQVERDKLNKYGRPLLGCTIKPKLGLSAKNYGRACYECLRGGLDFTKDDENVNSQPFMRWRDRFLFCAEAIYKSQAETGEIKGHYLNATAGTCEEMMKRAVFARELGVPIIMHDYLTGGFTANTSLAHYCRDNGLLLHIHRAMHAVIDRQKNHGIHFRVLAKALRMSGGDHIHSGTVVGKLEGEREITLGFVDLLRDDFIEKDRSRGIYFTQDWVSLPGVIPVASGGIHVWHMPALTEIFGDDSVLQFGGGTLGHPWGNAPGAVANRVALEACVKARNEGRDLAQEGNEIIREACKWSPELAAACEVWKEIVFNFAAVDVLDK</sequence>